<organism>
    <name type="scientific">Oceanobacillus iheyensis (strain DSM 14371 / CIP 107618 / JCM 11309 / KCTC 3954 / HTE831)</name>
    <dbReference type="NCBI Taxonomy" id="221109"/>
    <lineage>
        <taxon>Bacteria</taxon>
        <taxon>Bacillati</taxon>
        <taxon>Bacillota</taxon>
        <taxon>Bacilli</taxon>
        <taxon>Bacillales</taxon>
        <taxon>Bacillaceae</taxon>
        <taxon>Oceanobacillus</taxon>
    </lineage>
</organism>
<accession>Q8ERS7</accession>
<comment type="function">
    <text evidence="1">Asymmetrically hydrolyzes Ap4p to yield AMP and ATP.</text>
</comment>
<comment type="catalytic activity">
    <reaction evidence="1">
        <text>P(1),P(4)-bis(5'-guanosyl) tetraphosphate + H2O = GMP + GTP + 2 H(+)</text>
        <dbReference type="Rhea" id="RHEA:22484"/>
        <dbReference type="ChEBI" id="CHEBI:15377"/>
        <dbReference type="ChEBI" id="CHEBI:15378"/>
        <dbReference type="ChEBI" id="CHEBI:37565"/>
        <dbReference type="ChEBI" id="CHEBI:57553"/>
        <dbReference type="ChEBI" id="CHEBI:58115"/>
        <dbReference type="EC" id="3.6.1.17"/>
    </reaction>
</comment>
<comment type="cofactor">
    <cofactor evidence="1">
        <name>Ni(2+)</name>
        <dbReference type="ChEBI" id="CHEBI:49786"/>
    </cofactor>
</comment>
<comment type="similarity">
    <text evidence="1">Belongs to the PrpE family.</text>
</comment>
<dbReference type="EC" id="3.6.1.17" evidence="1"/>
<dbReference type="EMBL" id="BA000028">
    <property type="protein sequence ID" value="BAC13179.1"/>
    <property type="molecule type" value="Genomic_DNA"/>
</dbReference>
<dbReference type="RefSeq" id="WP_011065622.1">
    <property type="nucleotide sequence ID" value="NC_004193.1"/>
</dbReference>
<dbReference type="SMR" id="Q8ERS7"/>
<dbReference type="STRING" id="221109.gene:10733462"/>
<dbReference type="KEGG" id="oih:OB1223"/>
<dbReference type="eggNOG" id="COG0639">
    <property type="taxonomic scope" value="Bacteria"/>
</dbReference>
<dbReference type="HOGENOM" id="CLU_023125_3_0_9"/>
<dbReference type="OrthoDB" id="9807890at2"/>
<dbReference type="PhylomeDB" id="Q8ERS7"/>
<dbReference type="Proteomes" id="UP000000822">
    <property type="component" value="Chromosome"/>
</dbReference>
<dbReference type="GO" id="GO:0005737">
    <property type="term" value="C:cytoplasm"/>
    <property type="evidence" value="ECO:0007669"/>
    <property type="project" value="TreeGrafter"/>
</dbReference>
<dbReference type="GO" id="GO:0004081">
    <property type="term" value="F:bis(5'-nucleosyl)-tetraphosphatase (asymmetrical) activity"/>
    <property type="evidence" value="ECO:0007669"/>
    <property type="project" value="UniProtKB-UniRule"/>
</dbReference>
<dbReference type="GO" id="GO:0005525">
    <property type="term" value="F:GTP binding"/>
    <property type="evidence" value="ECO:0007669"/>
    <property type="project" value="UniProtKB-KW"/>
</dbReference>
<dbReference type="GO" id="GO:0016151">
    <property type="term" value="F:nickel cation binding"/>
    <property type="evidence" value="ECO:0007669"/>
    <property type="project" value="UniProtKB-UniRule"/>
</dbReference>
<dbReference type="GO" id="GO:0016791">
    <property type="term" value="F:phosphatase activity"/>
    <property type="evidence" value="ECO:0007669"/>
    <property type="project" value="TreeGrafter"/>
</dbReference>
<dbReference type="CDD" id="cd07423">
    <property type="entry name" value="MPP_Prp_like"/>
    <property type="match status" value="1"/>
</dbReference>
<dbReference type="Gene3D" id="3.60.21.10">
    <property type="match status" value="1"/>
</dbReference>
<dbReference type="HAMAP" id="MF_01443">
    <property type="entry name" value="PrpE"/>
    <property type="match status" value="1"/>
</dbReference>
<dbReference type="InterPro" id="IPR050126">
    <property type="entry name" value="Ap4A_hydrolase"/>
</dbReference>
<dbReference type="InterPro" id="IPR023937">
    <property type="entry name" value="Bis(5'-nucleosyl)-tetraP_PrpE"/>
</dbReference>
<dbReference type="InterPro" id="IPR004843">
    <property type="entry name" value="Calcineurin-like_PHP_ApaH"/>
</dbReference>
<dbReference type="InterPro" id="IPR029052">
    <property type="entry name" value="Metallo-depent_PP-like"/>
</dbReference>
<dbReference type="InterPro" id="IPR041780">
    <property type="entry name" value="MPP_PrpE-like"/>
</dbReference>
<dbReference type="InterPro" id="IPR006186">
    <property type="entry name" value="Ser/Thr-sp_prot-phosphatase"/>
</dbReference>
<dbReference type="NCBIfam" id="NF010148">
    <property type="entry name" value="PRK13625.1"/>
    <property type="match status" value="1"/>
</dbReference>
<dbReference type="PANTHER" id="PTHR42850:SF7">
    <property type="entry name" value="BIS(5'-NUCLEOSYL)-TETRAPHOSPHATASE PRPE [ASYMMETRICAL]"/>
    <property type="match status" value="1"/>
</dbReference>
<dbReference type="PANTHER" id="PTHR42850">
    <property type="entry name" value="METALLOPHOSPHOESTERASE"/>
    <property type="match status" value="1"/>
</dbReference>
<dbReference type="Pfam" id="PF00149">
    <property type="entry name" value="Metallophos"/>
    <property type="match status" value="1"/>
</dbReference>
<dbReference type="PRINTS" id="PR00114">
    <property type="entry name" value="STPHPHTASE"/>
</dbReference>
<dbReference type="SUPFAM" id="SSF56300">
    <property type="entry name" value="Metallo-dependent phosphatases"/>
    <property type="match status" value="1"/>
</dbReference>
<evidence type="ECO:0000255" key="1">
    <source>
        <dbReference type="HAMAP-Rule" id="MF_01443"/>
    </source>
</evidence>
<name>PRPE_OCEIH</name>
<gene>
    <name evidence="1" type="primary">prpE</name>
    <name type="ordered locus">OB1223</name>
</gene>
<sequence>MKIDIIGDVHGCLEELEELLFKLGYQIKNGTYQHSNNRQIVFVGDITDRGPDSIKVIKLVYQLVKEKLAYYIPGNHCNKLYRFFQGNKVMEKHGLETTTAEYRSLSKEKQNNIKHKFIELYERSPLYLHLKNINVIIAHAGIPEHLIGKKDKRTKTFVLYGDITGEFDTTGKPIRRDWAKHYHGDSWIVYGHTPVLEPRVVNHTINIDTGCVFGNKLTAYRFPEKEFVSVASRQPFIAEKFTDFNVSNEH</sequence>
<proteinExistence type="inferred from homology"/>
<protein>
    <recommendedName>
        <fullName evidence="1">Bis(5'-nucleosyl)-tetraphosphatase PrpE [asymmetrical]</fullName>
        <ecNumber evidence="1">3.6.1.17</ecNumber>
    </recommendedName>
    <alternativeName>
        <fullName evidence="1">Ap4A hydrolase</fullName>
    </alternativeName>
    <alternativeName>
        <fullName evidence="1">Diadenosine 5',5'''-P1,P4-tetraphosphate asymmetrical hydrolase</fullName>
        <shortName evidence="1">Diadenosine tetraphosphatase</shortName>
    </alternativeName>
</protein>
<feature type="chain" id="PRO_0000297705" description="Bis(5'-nucleosyl)-tetraphosphatase PrpE [asymmetrical]">
    <location>
        <begin position="1"/>
        <end position="250"/>
    </location>
</feature>
<keyword id="KW-0342">GTP-binding</keyword>
<keyword id="KW-0378">Hydrolase</keyword>
<keyword id="KW-0533">Nickel</keyword>
<keyword id="KW-0547">Nucleotide-binding</keyword>
<keyword id="KW-1185">Reference proteome</keyword>
<reference key="1">
    <citation type="journal article" date="2002" name="Nucleic Acids Res.">
        <title>Genome sequence of Oceanobacillus iheyensis isolated from the Iheya Ridge and its unexpected adaptive capabilities to extreme environments.</title>
        <authorList>
            <person name="Takami H."/>
            <person name="Takaki Y."/>
            <person name="Uchiyama I."/>
        </authorList>
    </citation>
    <scope>NUCLEOTIDE SEQUENCE [LARGE SCALE GENOMIC DNA]</scope>
    <source>
        <strain>DSM 14371 / CIP 107618 / JCM 11309 / KCTC 3954 / HTE831</strain>
    </source>
</reference>